<accession>P48788</accession>
<accession>A6NIV8</accession>
<accession>A6NJU5</accession>
<feature type="initiator methionine" description="Removed" evidence="1">
    <location>
        <position position="1"/>
    </location>
</feature>
<feature type="chain" id="PRO_0000186143" description="Troponin I, fast skeletal muscle">
    <location>
        <begin position="2"/>
        <end position="182"/>
    </location>
</feature>
<feature type="region of interest" description="Involved in binding TNC">
    <location>
        <begin position="2"/>
        <end position="48"/>
    </location>
</feature>
<feature type="region of interest" description="Involved in binding TNC and actin">
    <location>
        <begin position="97"/>
        <end position="117"/>
    </location>
</feature>
<feature type="modified residue" description="N-acetylglycine" evidence="1">
    <location>
        <position position="2"/>
    </location>
</feature>
<feature type="modified residue" description="Phosphothreonine" evidence="1">
    <location>
        <position position="12"/>
    </location>
</feature>
<feature type="modified residue" description="Phosphoserine" evidence="1">
    <location>
        <position position="118"/>
    </location>
</feature>
<feature type="splice variant" id="VSP_046052" description="In isoform 2." evidence="3">
    <original>MGDEE</original>
    <variation>MSQCK</variation>
    <location>
        <begin position="1"/>
        <end position="5"/>
    </location>
</feature>
<feature type="sequence variant" id="VAR_016087" description="In DA2B1; dbSNP:rs104894311." evidence="2">
    <original>R</original>
    <variation>Q</variation>
    <location>
        <position position="174"/>
    </location>
</feature>
<feature type="strand" evidence="6">
    <location>
        <begin position="106"/>
        <end position="108"/>
    </location>
</feature>
<feature type="helix" evidence="5">
    <location>
        <begin position="119"/>
        <end position="124"/>
    </location>
</feature>
<feature type="turn" evidence="5">
    <location>
        <begin position="125"/>
        <end position="127"/>
    </location>
</feature>
<keyword id="KW-0002">3D-structure</keyword>
<keyword id="KW-0007">Acetylation</keyword>
<keyword id="KW-0009">Actin-binding</keyword>
<keyword id="KW-0025">Alternative splicing</keyword>
<keyword id="KW-0225">Disease variant</keyword>
<keyword id="KW-0514">Muscle protein</keyword>
<keyword id="KW-0597">Phosphoprotein</keyword>
<keyword id="KW-1267">Proteomics identification</keyword>
<keyword id="KW-1185">Reference proteome</keyword>
<protein>
    <recommendedName>
        <fullName>Troponin I, fast skeletal muscle</fullName>
    </recommendedName>
    <alternativeName>
        <fullName>Troponin I, fast-twitch isoform</fullName>
    </alternativeName>
</protein>
<comment type="function">
    <text>Troponin I is the inhibitory subunit of troponin, the thin filament regulatory complex which confers calcium-sensitivity to striated muscle actomyosin ATPase activity.</text>
</comment>
<comment type="subunit">
    <text>Binds to actin and tropomyosin.</text>
</comment>
<comment type="interaction">
    <interactant intactId="EBI-7746394">
        <id>P48788</id>
    </interactant>
    <interactant intactId="EBI-8643161">
        <id>Q9NX04</id>
        <label>AIRIM</label>
    </interactant>
    <organismsDiffer>false</organismsDiffer>
    <experiments>3</experiments>
</comment>
<comment type="interaction">
    <interactant intactId="EBI-7746394">
        <id>P48788</id>
    </interactant>
    <interactant intactId="EBI-11962928">
        <id>Q9UI47-2</id>
        <label>CTNNA3</label>
    </interactant>
    <organismsDiffer>false</organismsDiffer>
    <experiments>3</experiments>
</comment>
<comment type="interaction">
    <interactant intactId="EBI-7746394">
        <id>P48788</id>
    </interactant>
    <interactant intactId="EBI-2213388">
        <id>Q8TEB1</id>
        <label>DCAF11</label>
    </interactant>
    <organismsDiffer>false</organismsDiffer>
    <experiments>3</experiments>
</comment>
<comment type="interaction">
    <interactant intactId="EBI-7746394">
        <id>P48788</id>
    </interactant>
    <interactant intactId="EBI-13317131">
        <id>Q5VUJ9-2</id>
        <label>EFCAB2</label>
    </interactant>
    <organismsDiffer>false</organismsDiffer>
    <experiments>3</experiments>
</comment>
<comment type="interaction">
    <interactant intactId="EBI-7746394">
        <id>P48788</id>
    </interactant>
    <interactant intactId="EBI-372412">
        <id>P11474</id>
        <label>ESRRA</label>
    </interactant>
    <organismsDiffer>false</organismsDiffer>
    <experiments>3</experiments>
</comment>
<comment type="interaction">
    <interactant intactId="EBI-7746394">
        <id>P48788</id>
    </interactant>
    <interactant intactId="EBI-12001340">
        <id>P62508-3</id>
        <label>ESRRG</label>
    </interactant>
    <organismsDiffer>false</organismsDiffer>
    <experiments>3</experiments>
</comment>
<comment type="interaction">
    <interactant intactId="EBI-7746394">
        <id>P48788</id>
    </interactant>
    <interactant intactId="EBI-743811">
        <id>Q8NEH6</id>
        <label>MNS1</label>
    </interactant>
    <organismsDiffer>false</organismsDiffer>
    <experiments>3</experiments>
</comment>
<comment type="interaction">
    <interactant intactId="EBI-7746394">
        <id>P48788</id>
    </interactant>
    <interactant intactId="EBI-744782">
        <id>Q9Y5B8</id>
        <label>NME7</label>
    </interactant>
    <organismsDiffer>false</organismsDiffer>
    <experiments>3</experiments>
</comment>
<comment type="interaction">
    <interactant intactId="EBI-7746394">
        <id>P48788</id>
    </interactant>
    <interactant intactId="EBI-357745">
        <id>P62195</id>
        <label>PSMC5</label>
    </interactant>
    <organismsDiffer>false</organismsDiffer>
    <experiments>3</experiments>
</comment>
<comment type="interaction">
    <interactant intactId="EBI-7746394">
        <id>P48788</id>
    </interactant>
    <interactant intactId="EBI-3906339">
        <id>P63316</id>
        <label>TNNC1</label>
    </interactant>
    <organismsDiffer>false</organismsDiffer>
    <experiments>2</experiments>
</comment>
<comment type="interaction">
    <interactant intactId="EBI-7746394">
        <id>P48788</id>
    </interactant>
    <interactant intactId="EBI-12151635">
        <id>P13805-3</id>
        <label>TNNT1</label>
    </interactant>
    <organismsDiffer>false</organismsDiffer>
    <experiments>3</experiments>
</comment>
<comment type="alternative products">
    <event type="alternative splicing"/>
    <isoform>
        <id>P48788-1</id>
        <name>1</name>
        <sequence type="displayed"/>
    </isoform>
    <isoform>
        <id>P48788-2</id>
        <name>2</name>
        <sequence type="described" ref="VSP_046052"/>
    </isoform>
</comment>
<comment type="disease" evidence="2">
    <disease id="DI-01493">
        <name>Arthrogryposis, distal, 2B1</name>
        <acronym>DA2B1</acronym>
        <description>A form of distal arthrogryposis, a disease characterized by congenital joint contractures that mainly involve two or more distal parts of the limbs, in the absence of a primary neurological or muscle disease. DA2B is characterized by contractures of the hands and feet, and a distinctive face characterized by prominent nasolabial folds, small mouth and downslanting palpebral fissures. DA2B1 inheritance is autosomal dominant.</description>
        <dbReference type="MIM" id="601680"/>
    </disease>
    <text>The disease is caused by variants affecting the gene represented in this entry.</text>
</comment>
<comment type="similarity">
    <text evidence="4">Belongs to the troponin I family.</text>
</comment>
<sequence length="182" mass="21339">MGDEEKRNRAITARRQHLKSVMLQIAATELEKEESRREAEKQNYLAEHCPPLHIPGSMSEVQELCKQLHAKIDAAEEEKYDMEVRVQKTSKELEDMNQKLFDLRGKFKRPPLRRVRMSADAMLKALLGSKHKVCMDLRANLKQVKKEDTEKERDLRDVGDWRKNIEEKSGMEGRKKMFESES</sequence>
<proteinExistence type="evidence at protein level"/>
<organism>
    <name type="scientific">Homo sapiens</name>
    <name type="common">Human</name>
    <dbReference type="NCBI Taxonomy" id="9606"/>
    <lineage>
        <taxon>Eukaryota</taxon>
        <taxon>Metazoa</taxon>
        <taxon>Chordata</taxon>
        <taxon>Craniata</taxon>
        <taxon>Vertebrata</taxon>
        <taxon>Euteleostomi</taxon>
        <taxon>Mammalia</taxon>
        <taxon>Eutheria</taxon>
        <taxon>Euarchontoglires</taxon>
        <taxon>Primates</taxon>
        <taxon>Haplorrhini</taxon>
        <taxon>Catarrhini</taxon>
        <taxon>Hominidae</taxon>
        <taxon>Homo</taxon>
    </lineage>
</organism>
<name>TNNI2_HUMAN</name>
<dbReference type="EMBL" id="L21715">
    <property type="protein sequence ID" value="AAA19813.1"/>
    <property type="molecule type" value="mRNA"/>
</dbReference>
<dbReference type="EMBL" id="AJ245761">
    <property type="protein sequence ID" value="CAB59981.1"/>
    <property type="molecule type" value="Genomic_DNA"/>
</dbReference>
<dbReference type="EMBL" id="AC051649">
    <property type="status" value="NOT_ANNOTATED_CDS"/>
    <property type="molecule type" value="Genomic_DNA"/>
</dbReference>
<dbReference type="EMBL" id="BC032148">
    <property type="protein sequence ID" value="AAH32148.1"/>
    <property type="molecule type" value="mRNA"/>
</dbReference>
<dbReference type="EMBL" id="BI833431">
    <property type="status" value="NOT_ANNOTATED_CDS"/>
    <property type="molecule type" value="mRNA"/>
</dbReference>
<dbReference type="CCDS" id="CCDS31333.1">
    <molecule id="P48788-1"/>
</dbReference>
<dbReference type="CCDS" id="CCDS53594.1">
    <molecule id="P48788-2"/>
</dbReference>
<dbReference type="PIR" id="S43508">
    <property type="entry name" value="TPHUIS"/>
</dbReference>
<dbReference type="RefSeq" id="NP_001139301.1">
    <molecule id="P48788-1"/>
    <property type="nucleotide sequence ID" value="NM_001145829.2"/>
</dbReference>
<dbReference type="RefSeq" id="NP_001139313.1">
    <molecule id="P48788-2"/>
    <property type="nucleotide sequence ID" value="NM_001145841.2"/>
</dbReference>
<dbReference type="RefSeq" id="NP_003273.1">
    <molecule id="P48788-1"/>
    <property type="nucleotide sequence ID" value="NM_003282.4"/>
</dbReference>
<dbReference type="PDB" id="2MKP">
    <property type="method" value="NMR"/>
    <property type="chains" value="I=116-132"/>
</dbReference>
<dbReference type="PDB" id="7KAA">
    <property type="method" value="NMR"/>
    <property type="chains" value="A=99-148"/>
</dbReference>
<dbReference type="PDBsum" id="2MKP"/>
<dbReference type="PDBsum" id="7KAA"/>
<dbReference type="BMRB" id="P48788"/>
<dbReference type="SMR" id="P48788"/>
<dbReference type="BioGRID" id="112990">
    <property type="interactions" value="30"/>
</dbReference>
<dbReference type="FunCoup" id="P48788">
    <property type="interactions" value="390"/>
</dbReference>
<dbReference type="IntAct" id="P48788">
    <property type="interactions" value="24"/>
</dbReference>
<dbReference type="MINT" id="P48788"/>
<dbReference type="STRING" id="9606.ENSP00000371336"/>
<dbReference type="ChEMBL" id="CHEMBL3831282"/>
<dbReference type="iPTMnet" id="P48788"/>
<dbReference type="PhosphoSitePlus" id="P48788"/>
<dbReference type="BioMuta" id="TNNI2"/>
<dbReference type="DMDM" id="1351297"/>
<dbReference type="jPOST" id="P48788"/>
<dbReference type="MassIVE" id="P48788"/>
<dbReference type="PaxDb" id="9606-ENSP00000371331"/>
<dbReference type="PeptideAtlas" id="P48788"/>
<dbReference type="ProteomicsDB" id="1290"/>
<dbReference type="ProteomicsDB" id="55948">
    <molecule id="P48788-1"/>
</dbReference>
<dbReference type="Antibodypedia" id="4359">
    <property type="antibodies" value="450 antibodies from 33 providers"/>
</dbReference>
<dbReference type="DNASU" id="7136"/>
<dbReference type="Ensembl" id="ENST00000252898.11">
    <molecule id="P48788-1"/>
    <property type="protein sequence ID" value="ENSP00000252898.7"/>
    <property type="gene ID" value="ENSG00000130598.17"/>
</dbReference>
<dbReference type="Ensembl" id="ENST00000381905.3">
    <molecule id="P48788-2"/>
    <property type="protein sequence ID" value="ENSP00000371330.3"/>
    <property type="gene ID" value="ENSG00000130598.17"/>
</dbReference>
<dbReference type="Ensembl" id="ENST00000381906.5">
    <molecule id="P48788-1"/>
    <property type="protein sequence ID" value="ENSP00000371331.1"/>
    <property type="gene ID" value="ENSG00000130598.17"/>
</dbReference>
<dbReference type="Ensembl" id="ENST00000381911.6">
    <molecule id="P48788-1"/>
    <property type="protein sequence ID" value="ENSP00000371336.1"/>
    <property type="gene ID" value="ENSG00000130598.17"/>
</dbReference>
<dbReference type="Ensembl" id="ENST00000672014.1">
    <molecule id="P48788-1"/>
    <property type="protein sequence ID" value="ENSP00000500698.1"/>
    <property type="gene ID" value="ENSG00000288219.1"/>
</dbReference>
<dbReference type="Ensembl" id="ENST00000672155.1">
    <molecule id="P48788-2"/>
    <property type="protein sequence ID" value="ENSP00000500808.1"/>
    <property type="gene ID" value="ENSG00000288219.1"/>
</dbReference>
<dbReference type="Ensembl" id="ENST00000672632.1">
    <molecule id="P48788-1"/>
    <property type="protein sequence ID" value="ENSP00000500770.1"/>
    <property type="gene ID" value="ENSG00000288219.1"/>
</dbReference>
<dbReference type="Ensembl" id="ENST00000673526.1">
    <molecule id="P48788-1"/>
    <property type="protein sequence ID" value="ENSP00000500044.1"/>
    <property type="gene ID" value="ENSG00000288219.1"/>
</dbReference>
<dbReference type="GeneID" id="7136"/>
<dbReference type="KEGG" id="hsa:7136"/>
<dbReference type="MANE-Select" id="ENST00000381911.6">
    <property type="protein sequence ID" value="ENSP00000371336.1"/>
    <property type="RefSeq nucleotide sequence ID" value="NM_003282.4"/>
    <property type="RefSeq protein sequence ID" value="NP_003273.1"/>
</dbReference>
<dbReference type="UCSC" id="uc010qxe.2">
    <molecule id="P48788-1"/>
    <property type="organism name" value="human"/>
</dbReference>
<dbReference type="AGR" id="HGNC:11946"/>
<dbReference type="CTD" id="7136"/>
<dbReference type="DisGeNET" id="7136"/>
<dbReference type="GeneCards" id="TNNI2"/>
<dbReference type="HGNC" id="HGNC:11946">
    <property type="gene designation" value="TNNI2"/>
</dbReference>
<dbReference type="HPA" id="ENSG00000130598">
    <property type="expression patterns" value="Group enriched (skeletal muscle, tongue)"/>
</dbReference>
<dbReference type="MalaCards" id="TNNI2"/>
<dbReference type="MIM" id="191043">
    <property type="type" value="gene"/>
</dbReference>
<dbReference type="MIM" id="601680">
    <property type="type" value="phenotype"/>
</dbReference>
<dbReference type="neXtProt" id="NX_P48788"/>
<dbReference type="OpenTargets" id="ENSG00000130598"/>
<dbReference type="Orphanet" id="1146">
    <property type="disease" value="Distal arthrogryposis type 1"/>
</dbReference>
<dbReference type="Orphanet" id="1147">
    <property type="disease" value="Sheldon-Hall syndrome"/>
</dbReference>
<dbReference type="PharmGKB" id="PA36635"/>
<dbReference type="VEuPathDB" id="HostDB:ENSG00000130598"/>
<dbReference type="eggNOG" id="KOG3977">
    <property type="taxonomic scope" value="Eukaryota"/>
</dbReference>
<dbReference type="GeneTree" id="ENSGT01030000234588"/>
<dbReference type="HOGENOM" id="CLU_098686_1_0_1"/>
<dbReference type="InParanoid" id="P48788"/>
<dbReference type="OMA" id="KRHRAIT"/>
<dbReference type="OrthoDB" id="371899at2759"/>
<dbReference type="PAN-GO" id="P48788">
    <property type="GO annotations" value="3 GO annotations based on evolutionary models"/>
</dbReference>
<dbReference type="PhylomeDB" id="P48788"/>
<dbReference type="TreeFam" id="TF313374"/>
<dbReference type="PathwayCommons" id="P48788"/>
<dbReference type="Reactome" id="R-HSA-390522">
    <property type="pathway name" value="Striated Muscle Contraction"/>
</dbReference>
<dbReference type="SignaLink" id="P48788"/>
<dbReference type="SIGNOR" id="P48788"/>
<dbReference type="BioGRID-ORCS" id="7136">
    <property type="hits" value="8 hits in 1140 CRISPR screens"/>
</dbReference>
<dbReference type="GeneWiki" id="TNNI2"/>
<dbReference type="GenomeRNAi" id="7136"/>
<dbReference type="Pharos" id="P48788">
    <property type="development level" value="Tbio"/>
</dbReference>
<dbReference type="PRO" id="PR:P48788"/>
<dbReference type="Proteomes" id="UP000005640">
    <property type="component" value="Chromosome 11"/>
</dbReference>
<dbReference type="RNAct" id="P48788">
    <property type="molecule type" value="protein"/>
</dbReference>
<dbReference type="Bgee" id="ENSG00000130598">
    <property type="expression patterns" value="Expressed in hindlimb stylopod muscle and 95 other cell types or tissues"/>
</dbReference>
<dbReference type="ExpressionAtlas" id="P48788">
    <property type="expression patterns" value="baseline and differential"/>
</dbReference>
<dbReference type="GO" id="GO:0005829">
    <property type="term" value="C:cytosol"/>
    <property type="evidence" value="ECO:0000304"/>
    <property type="project" value="Reactome"/>
</dbReference>
<dbReference type="GO" id="GO:0005634">
    <property type="term" value="C:nucleus"/>
    <property type="evidence" value="ECO:0000314"/>
    <property type="project" value="UniProtKB"/>
</dbReference>
<dbReference type="GO" id="GO:0005861">
    <property type="term" value="C:troponin complex"/>
    <property type="evidence" value="ECO:0000314"/>
    <property type="project" value="UniProtKB"/>
</dbReference>
<dbReference type="GO" id="GO:0003779">
    <property type="term" value="F:actin binding"/>
    <property type="evidence" value="ECO:0007669"/>
    <property type="project" value="UniProtKB-KW"/>
</dbReference>
<dbReference type="GO" id="GO:0031014">
    <property type="term" value="F:troponin T binding"/>
    <property type="evidence" value="ECO:0000353"/>
    <property type="project" value="UniProtKB"/>
</dbReference>
<dbReference type="GO" id="GO:0060048">
    <property type="term" value="P:cardiac muscle contraction"/>
    <property type="evidence" value="ECO:0000318"/>
    <property type="project" value="GO_Central"/>
</dbReference>
<dbReference type="GO" id="GO:0045893">
    <property type="term" value="P:positive regulation of DNA-templated transcription"/>
    <property type="evidence" value="ECO:0000314"/>
    <property type="project" value="UniProtKB"/>
</dbReference>
<dbReference type="GO" id="GO:0003009">
    <property type="term" value="P:skeletal muscle contraction"/>
    <property type="evidence" value="ECO:0000314"/>
    <property type="project" value="UniProtKB"/>
</dbReference>
<dbReference type="DisProt" id="DP01747"/>
<dbReference type="FunFam" id="1.20.5.350:FF:000002">
    <property type="entry name" value="troponin I, fast skeletal muscle"/>
    <property type="match status" value="1"/>
</dbReference>
<dbReference type="Gene3D" id="1.20.5.350">
    <property type="match status" value="1"/>
</dbReference>
<dbReference type="Gene3D" id="6.10.250.180">
    <property type="match status" value="1"/>
</dbReference>
<dbReference type="InterPro" id="IPR001978">
    <property type="entry name" value="Troponin"/>
</dbReference>
<dbReference type="InterPro" id="IPR050875">
    <property type="entry name" value="Troponin_I"/>
</dbReference>
<dbReference type="InterPro" id="IPR038077">
    <property type="entry name" value="Troponin_sf"/>
</dbReference>
<dbReference type="PANTHER" id="PTHR13738">
    <property type="entry name" value="TROPONIN I"/>
    <property type="match status" value="1"/>
</dbReference>
<dbReference type="PANTHER" id="PTHR13738:SF15">
    <property type="entry name" value="TROPONIN I, FAST SKELETAL MUSCLE"/>
    <property type="match status" value="1"/>
</dbReference>
<dbReference type="Pfam" id="PF00992">
    <property type="entry name" value="Troponin"/>
    <property type="match status" value="1"/>
</dbReference>
<dbReference type="SUPFAM" id="SSF90250">
    <property type="entry name" value="Troponin coil-coiled subunits"/>
    <property type="match status" value="1"/>
</dbReference>
<gene>
    <name type="primary">TNNI2</name>
</gene>
<reference key="1">
    <citation type="journal article" date="1994" name="Biochim. Biophys. Acta">
        <title>Sequencing of a cDNA encoding the human fast-twitch skeletal muscle isoform of troponin I.</title>
        <authorList>
            <person name="Zhu L."/>
            <person name="Perez-Alvarado G."/>
            <person name="Wade R."/>
        </authorList>
    </citation>
    <scope>NUCLEOTIDE SEQUENCE [MRNA] (ISOFORM 1)</scope>
    <source>
        <tissue>Skeletal muscle</tissue>
    </source>
</reference>
<reference key="2">
    <citation type="journal article" date="2000" name="Gene">
        <title>Structural characterization of the human fast skeletal muscle troponin I gene (TNNI2).</title>
        <authorList>
            <person name="Mullen A.J."/>
            <person name="Barton P.J.R."/>
        </authorList>
    </citation>
    <scope>NUCLEOTIDE SEQUENCE [GENOMIC DNA]</scope>
</reference>
<reference key="3">
    <citation type="journal article" date="2006" name="Nature">
        <title>Human chromosome 11 DNA sequence and analysis including novel gene identification.</title>
        <authorList>
            <person name="Taylor T.D."/>
            <person name="Noguchi H."/>
            <person name="Totoki Y."/>
            <person name="Toyoda A."/>
            <person name="Kuroki Y."/>
            <person name="Dewar K."/>
            <person name="Lloyd C."/>
            <person name="Itoh T."/>
            <person name="Takeda T."/>
            <person name="Kim D.-W."/>
            <person name="She X."/>
            <person name="Barlow K.F."/>
            <person name="Bloom T."/>
            <person name="Bruford E."/>
            <person name="Chang J.L."/>
            <person name="Cuomo C.A."/>
            <person name="Eichler E."/>
            <person name="FitzGerald M.G."/>
            <person name="Jaffe D.B."/>
            <person name="LaButti K."/>
            <person name="Nicol R."/>
            <person name="Park H.-S."/>
            <person name="Seaman C."/>
            <person name="Sougnez C."/>
            <person name="Yang X."/>
            <person name="Zimmer A.R."/>
            <person name="Zody M.C."/>
            <person name="Birren B.W."/>
            <person name="Nusbaum C."/>
            <person name="Fujiyama A."/>
            <person name="Hattori M."/>
            <person name="Rogers J."/>
            <person name="Lander E.S."/>
            <person name="Sakaki Y."/>
        </authorList>
    </citation>
    <scope>NUCLEOTIDE SEQUENCE [LARGE SCALE GENOMIC DNA]</scope>
</reference>
<reference key="4">
    <citation type="journal article" date="2004" name="Genome Res.">
        <title>The status, quality, and expansion of the NIH full-length cDNA project: the Mammalian Gene Collection (MGC).</title>
        <authorList>
            <consortium name="The MGC Project Team"/>
        </authorList>
    </citation>
    <scope>NUCLEOTIDE SEQUENCE [LARGE SCALE MRNA] (ISOFORMS 1 AND 2)</scope>
    <source>
        <tissue>Muscle</tissue>
    </source>
</reference>
<reference key="5">
    <citation type="journal article" date="2003" name="Am. J. Hum. Genet.">
        <title>Mutations in genes encoding fast-twitch contractile proteins cause distal arthrogryposis syndromes.</title>
        <authorList>
            <person name="Sung S.S."/>
            <person name="Brassington A.-M.E."/>
            <person name="Grannatt K."/>
            <person name="Rutherford A."/>
            <person name="Whitby F.G."/>
            <person name="Krakowiak P.A."/>
            <person name="Jorde L.B."/>
            <person name="Carey J.C."/>
            <person name="Bamshad M."/>
        </authorList>
    </citation>
    <scope>VARIANT DA2B1 GLN-174</scope>
</reference>
<evidence type="ECO:0000250" key="1">
    <source>
        <dbReference type="UniProtKB" id="P02643"/>
    </source>
</evidence>
<evidence type="ECO:0000269" key="2">
    <source>
    </source>
</evidence>
<evidence type="ECO:0000303" key="3">
    <source>
    </source>
</evidence>
<evidence type="ECO:0000305" key="4"/>
<evidence type="ECO:0007829" key="5">
    <source>
        <dbReference type="PDB" id="2MKP"/>
    </source>
</evidence>
<evidence type="ECO:0007829" key="6">
    <source>
        <dbReference type="PDB" id="7KAA"/>
    </source>
</evidence>